<organism>
    <name type="scientific">Vaccinia virus (strain Western Reserve)</name>
    <name type="common">VACV</name>
    <name type="synonym">Vaccinia virus (strain WR)</name>
    <dbReference type="NCBI Taxonomy" id="10254"/>
    <lineage>
        <taxon>Viruses</taxon>
        <taxon>Varidnaviria</taxon>
        <taxon>Bamfordvirae</taxon>
        <taxon>Nucleocytoviricota</taxon>
        <taxon>Pokkesviricetes</taxon>
        <taxon>Chitovirales</taxon>
        <taxon>Poxviridae</taxon>
        <taxon>Chordopoxvirinae</taxon>
        <taxon>Orthopoxvirus</taxon>
        <taxon>Vaccinia virus</taxon>
    </lineage>
</organism>
<evidence type="ECO:0000269" key="1">
    <source>
    </source>
</evidence>
<evidence type="ECO:0000269" key="2">
    <source>
    </source>
</evidence>
<evidence type="ECO:0000305" key="3"/>
<evidence type="ECO:0000305" key="4">
    <source>
    </source>
</evidence>
<name>PG069_VACCW</name>
<gene>
    <name type="primary">OPG069</name>
    <name type="ordered locus">VACWR063</name>
    <name type="ORF">E7R</name>
</gene>
<reference key="1">
    <citation type="journal article" date="1990" name="Mol. Cell. Biol.">
        <title>Identification of rpo30, a vaccinia virus RNA polymerase gene with structural similarity to a eucaryotic transcription elongation factor.</title>
        <authorList>
            <person name="Ahn B.-Y."/>
            <person name="Gershon P.D."/>
            <person name="Jones E.V."/>
            <person name="Moss B."/>
        </authorList>
    </citation>
    <scope>NUCLEOTIDE SEQUENCE [GENOMIC DNA]</scope>
</reference>
<reference key="2">
    <citation type="journal article" date="1986" name="Proc. Natl. Acad. Sci. U.S.A.">
        <title>Homology between DNA polymerases of poxviruses, herpesviruses, and adenoviruses: nucleotide sequence of the vaccinia virus DNA polymerase gene.</title>
        <authorList>
            <person name="Earl P.L."/>
            <person name="Jones E.V."/>
            <person name="Moss B."/>
        </authorList>
    </citation>
    <scope>NUCLEOTIDE SEQUENCE [GENOMIC DNA]</scope>
</reference>
<reference key="3">
    <citation type="submission" date="2003-02" db="EMBL/GenBank/DDBJ databases">
        <title>Sequencing of the coding region of Vaccinia-WR to an average 9-fold redundancy and an error rate of 0.16/10kb.</title>
        <authorList>
            <person name="Esposito J.J."/>
            <person name="Frace A.M."/>
            <person name="Sammons S.A."/>
            <person name="Olsen-Rasmussen M."/>
            <person name="Osborne J."/>
            <person name="Wohlhueter R."/>
        </authorList>
    </citation>
    <scope>NUCLEOTIDE SEQUENCE [LARGE SCALE GENOMIC DNA]</scope>
</reference>
<reference key="4">
    <citation type="journal article" date="1997" name="J. Virol.">
        <title>Identification and analysis of three myristylated vaccinia virus late proteins.</title>
        <authorList>
            <person name="Martin K.H."/>
            <person name="Grosenbach D.W."/>
            <person name="Franke C.A."/>
            <person name="Hruby D.E."/>
        </authorList>
    </citation>
    <scope>MYRISTOYLATION AT GLY-2</scope>
    <scope>SUBCELLULAR LOCATION</scope>
    <scope>MUTAGENESIS OF GLY-2</scope>
</reference>
<reference key="5">
    <citation type="journal article" date="2015" name="J. Virol.">
        <title>Deciphering poxvirus gene expression by RNA sequencing and ribosome profiling.</title>
        <authorList>
            <person name="Yang Z."/>
            <person name="Cao S."/>
            <person name="Martens C.A."/>
            <person name="Porcella S.F."/>
            <person name="Xie Z."/>
            <person name="Ma M."/>
            <person name="Shen B."/>
            <person name="Moss B."/>
        </authorList>
    </citation>
    <scope>INDUCTION</scope>
</reference>
<protein>
    <recommendedName>
        <fullName>Protein OPG069</fullName>
    </recommendedName>
    <alternativeName>
        <fullName>Protein E7</fullName>
    </alternativeName>
</protein>
<comment type="subcellular location">
    <subcellularLocation>
        <location evidence="4">Host cytoplasm</location>
    </subcellularLocation>
</comment>
<comment type="induction">
    <text evidence="1">Expressed in the intermediate phase of the viral replicative cycle.</text>
</comment>
<comment type="PTM">
    <text evidence="2">Myristoylated.</text>
</comment>
<comment type="similarity">
    <text evidence="3">Belongs to the orthopoxvirus OPG069 family.</text>
</comment>
<keyword id="KW-1035">Host cytoplasm</keyword>
<keyword id="KW-0449">Lipoprotein</keyword>
<keyword id="KW-0519">Myristate</keyword>
<keyword id="KW-1185">Reference proteome</keyword>
<accession>P68446</accession>
<accession>P21048</accession>
<accession>Q76ZV8</accession>
<feature type="initiator methionine" description="Removed; by host">
    <location>
        <position position="1"/>
    </location>
</feature>
<feature type="chain" id="PRO_0000099459" description="Protein OPG069">
    <location>
        <begin position="2"/>
        <end position="166"/>
    </location>
</feature>
<feature type="lipid moiety-binding region" description="N-myristoyl glycine; by host" evidence="2">
    <location>
        <position position="2"/>
    </location>
</feature>
<feature type="mutagenesis site" description="Complete loss of myristoylation." evidence="2">
    <original>G</original>
    <variation>A</variation>
    <location>
        <position position="2"/>
    </location>
</feature>
<sequence>MGTAATIQTPTKLMNKENAEMILEKIVDHIVMYISDESSDSENNPEYIDFRNRYEDYRSLIIKSDHEFVKLCKNHAEKSSPETQQMIIKHIYEQYLIPVSEVLLKPIMSMGDIITYNGCKDNEWMLEQLSTLNFNNLRTWNSCSIGNVTRLFYTFFSYLMKDKLNI</sequence>
<proteinExistence type="evidence at protein level"/>
<organismHost>
    <name type="scientific">Bos taurus</name>
    <name type="common">Bovine</name>
    <dbReference type="NCBI Taxonomy" id="9913"/>
</organismHost>
<dbReference type="EMBL" id="M36339">
    <property type="protein sequence ID" value="AAB59827.1"/>
    <property type="molecule type" value="Genomic_DNA"/>
</dbReference>
<dbReference type="EMBL" id="M13213">
    <property type="protein sequence ID" value="AAA98421.1"/>
    <property type="molecule type" value="Genomic_DNA"/>
</dbReference>
<dbReference type="EMBL" id="AY243312">
    <property type="protein sequence ID" value="AAO89342.1"/>
    <property type="molecule type" value="Genomic_DNA"/>
</dbReference>
<dbReference type="RefSeq" id="YP_232945.1">
    <property type="nucleotide sequence ID" value="NC_006998.1"/>
</dbReference>
<dbReference type="ELM" id="P68446"/>
<dbReference type="IntAct" id="P68446">
    <property type="interactions" value="1"/>
</dbReference>
<dbReference type="MINT" id="P68446"/>
<dbReference type="iPTMnet" id="P68446"/>
<dbReference type="DNASU" id="3707596"/>
<dbReference type="GeneID" id="3707596"/>
<dbReference type="KEGG" id="vg:3707596"/>
<dbReference type="Proteomes" id="UP000000344">
    <property type="component" value="Genome"/>
</dbReference>
<dbReference type="GO" id="GO:0030430">
    <property type="term" value="C:host cell cytoplasm"/>
    <property type="evidence" value="ECO:0007669"/>
    <property type="project" value="UniProtKB-SubCell"/>
</dbReference>
<dbReference type="InterPro" id="IPR035345">
    <property type="entry name" value="E7R_orthopoxvir"/>
</dbReference>
<dbReference type="Pfam" id="PF17467">
    <property type="entry name" value="E7R"/>
    <property type="match status" value="1"/>
</dbReference>